<name>AAPK2_RAT</name>
<evidence type="ECO:0000250" key="1"/>
<evidence type="ECO:0000250" key="2">
    <source>
        <dbReference type="UniProtKB" id="P54646"/>
    </source>
</evidence>
<evidence type="ECO:0000250" key="3">
    <source>
        <dbReference type="UniProtKB" id="Q13131"/>
    </source>
</evidence>
<evidence type="ECO:0000250" key="4">
    <source>
        <dbReference type="UniProtKB" id="Q8BRK8"/>
    </source>
</evidence>
<evidence type="ECO:0000255" key="5">
    <source>
        <dbReference type="PROSITE-ProRule" id="PRU00159"/>
    </source>
</evidence>
<evidence type="ECO:0000255" key="6">
    <source>
        <dbReference type="PROSITE-ProRule" id="PRU10027"/>
    </source>
</evidence>
<evidence type="ECO:0000256" key="7">
    <source>
        <dbReference type="SAM" id="MobiDB-lite"/>
    </source>
</evidence>
<evidence type="ECO:0000269" key="8">
    <source>
    </source>
</evidence>
<evidence type="ECO:0000269" key="9">
    <source>
    </source>
</evidence>
<evidence type="ECO:0000269" key="10">
    <source>
    </source>
</evidence>
<evidence type="ECO:0000269" key="11">
    <source>
    </source>
</evidence>
<evidence type="ECO:0000269" key="12">
    <source>
    </source>
</evidence>
<evidence type="ECO:0000269" key="13">
    <source>
    </source>
</evidence>
<evidence type="ECO:0000269" key="14">
    <source>
    </source>
</evidence>
<evidence type="ECO:0000269" key="15">
    <source>
    </source>
</evidence>
<evidence type="ECO:0000269" key="16">
    <source>
    </source>
</evidence>
<evidence type="ECO:0000269" key="17">
    <source>
    </source>
</evidence>
<evidence type="ECO:0000269" key="18">
    <source>
    </source>
</evidence>
<evidence type="ECO:0000269" key="19">
    <source>
    </source>
</evidence>
<evidence type="ECO:0000269" key="20">
    <source>
    </source>
</evidence>
<evidence type="ECO:0000269" key="21">
    <source>
    </source>
</evidence>
<evidence type="ECO:0000269" key="22">
    <source>
    </source>
</evidence>
<evidence type="ECO:0000269" key="23">
    <source>
    </source>
</evidence>
<evidence type="ECO:0000269" key="24">
    <source>
    </source>
</evidence>
<evidence type="ECO:0000303" key="25">
    <source>
    </source>
</evidence>
<evidence type="ECO:0000305" key="26"/>
<evidence type="ECO:0007744" key="27">
    <source>
    </source>
</evidence>
<organism>
    <name type="scientific">Rattus norvegicus</name>
    <name type="common">Rat</name>
    <dbReference type="NCBI Taxonomy" id="10116"/>
    <lineage>
        <taxon>Eukaryota</taxon>
        <taxon>Metazoa</taxon>
        <taxon>Chordata</taxon>
        <taxon>Craniata</taxon>
        <taxon>Vertebrata</taxon>
        <taxon>Euteleostomi</taxon>
        <taxon>Mammalia</taxon>
        <taxon>Eutheria</taxon>
        <taxon>Euarchontoglires</taxon>
        <taxon>Glires</taxon>
        <taxon>Rodentia</taxon>
        <taxon>Myomorpha</taxon>
        <taxon>Muroidea</taxon>
        <taxon>Muridae</taxon>
        <taxon>Murinae</taxon>
        <taxon>Rattus</taxon>
    </lineage>
</organism>
<feature type="chain" id="PRO_0000085597" description="5'-AMP-activated protein kinase catalytic subunit alpha-2">
    <location>
        <begin position="1"/>
        <end position="552"/>
    </location>
</feature>
<feature type="domain" description="Protein kinase" evidence="5">
    <location>
        <begin position="16"/>
        <end position="268"/>
    </location>
</feature>
<feature type="region of interest" description="AIS" evidence="3">
    <location>
        <begin position="291"/>
        <end position="376"/>
    </location>
</feature>
<feature type="region of interest" description="Disordered" evidence="7">
    <location>
        <begin position="478"/>
        <end position="520"/>
    </location>
</feature>
<feature type="compositionally biased region" description="Polar residues" evidence="7">
    <location>
        <begin position="480"/>
        <end position="490"/>
    </location>
</feature>
<feature type="compositionally biased region" description="Polar residues" evidence="7">
    <location>
        <begin position="501"/>
        <end position="510"/>
    </location>
</feature>
<feature type="compositionally biased region" description="Low complexity" evidence="7">
    <location>
        <begin position="511"/>
        <end position="520"/>
    </location>
</feature>
<feature type="active site" description="Proton acceptor" evidence="5 6">
    <location>
        <position position="139"/>
    </location>
</feature>
<feature type="binding site" evidence="5">
    <location>
        <begin position="22"/>
        <end position="30"/>
    </location>
    <ligand>
        <name>ATP</name>
        <dbReference type="ChEBI" id="CHEBI:30616"/>
    </ligand>
</feature>
<feature type="binding site" evidence="5">
    <location>
        <position position="45"/>
    </location>
    <ligand>
        <name>ATP</name>
        <dbReference type="ChEBI" id="CHEBI:30616"/>
    </ligand>
</feature>
<feature type="modified residue" description="Phosphothreonine; by LKB1 and CaMKK2" evidence="15 16 18 19 23">
    <location>
        <position position="172"/>
    </location>
</feature>
<feature type="modified residue" description="Phosphothreonine" evidence="14">
    <location>
        <position position="258"/>
    </location>
</feature>
<feature type="modified residue" description="Phosphoserine" evidence="27">
    <location>
        <position position="377"/>
    </location>
</feature>
<feature type="modified residue" description="Phosphoserine" evidence="14">
    <location>
        <position position="491"/>
    </location>
</feature>
<feature type="splice variant" id="VSP_004949" description="In isoform Short." evidence="25">
    <location>
        <begin position="32"/>
        <end position="388"/>
    </location>
</feature>
<feature type="splice variant" id="VSP_004950" description="In isoform Short." evidence="25">
    <location>
        <begin position="392"/>
        <end position="552"/>
    </location>
</feature>
<feature type="sequence conflict" description="In Ref. 2; AAA85033." evidence="26" ref="2">
    <original>M</original>
    <variation>S</variation>
    <location>
        <position position="355"/>
    </location>
</feature>
<feature type="sequence conflict" description="In Ref. 2; AAA85033." evidence="26" ref="2">
    <original>N</original>
    <variation>D</variation>
    <location>
        <position position="462"/>
    </location>
</feature>
<keyword id="KW-0025">Alternative splicing</keyword>
<keyword id="KW-0067">ATP-binding</keyword>
<keyword id="KW-0072">Autophagy</keyword>
<keyword id="KW-0090">Biological rhythms</keyword>
<keyword id="KW-0152">Cholesterol biosynthesis</keyword>
<keyword id="KW-0153">Cholesterol metabolism</keyword>
<keyword id="KW-0156">Chromatin regulator</keyword>
<keyword id="KW-0963">Cytoplasm</keyword>
<keyword id="KW-0903">Direct protein sequencing</keyword>
<keyword id="KW-0275">Fatty acid biosynthesis</keyword>
<keyword id="KW-0276">Fatty acid metabolism</keyword>
<keyword id="KW-0418">Kinase</keyword>
<keyword id="KW-0444">Lipid biosynthesis</keyword>
<keyword id="KW-0443">Lipid metabolism</keyword>
<keyword id="KW-0460">Magnesium</keyword>
<keyword id="KW-0479">Metal-binding</keyword>
<keyword id="KW-0547">Nucleotide-binding</keyword>
<keyword id="KW-0539">Nucleus</keyword>
<keyword id="KW-0597">Phosphoprotein</keyword>
<keyword id="KW-1185">Reference proteome</keyword>
<keyword id="KW-0723">Serine/threonine-protein kinase</keyword>
<keyword id="KW-0752">Steroid biosynthesis</keyword>
<keyword id="KW-0753">Steroid metabolism</keyword>
<keyword id="KW-0756">Sterol biosynthesis</keyword>
<keyword id="KW-1207">Sterol metabolism</keyword>
<keyword id="KW-0804">Transcription</keyword>
<keyword id="KW-0805">Transcription regulation</keyword>
<keyword id="KW-0808">Transferase</keyword>
<keyword id="KW-0832">Ubl conjugation</keyword>
<keyword id="KW-0879">Wnt signaling pathway</keyword>
<gene>
    <name type="primary">Prkaa2</name>
    <name type="synonym">Ampk</name>
    <name type="synonym">Ampk2</name>
</gene>
<dbReference type="EC" id="2.7.11.1" evidence="21 24"/>
<dbReference type="EC" id="2.7.11.31" evidence="21"/>
<dbReference type="EMBL" id="Z29486">
    <property type="protein sequence ID" value="CAA82620.1"/>
    <property type="molecule type" value="mRNA"/>
</dbReference>
<dbReference type="EMBL" id="U12149">
    <property type="protein sequence ID" value="AAA85033.1"/>
    <property type="molecule type" value="mRNA"/>
</dbReference>
<dbReference type="PIR" id="A53621">
    <property type="entry name" value="A53621"/>
</dbReference>
<dbReference type="RefSeq" id="NP_076481.1">
    <property type="nucleotide sequence ID" value="NM_023991.1"/>
</dbReference>
<dbReference type="BMRB" id="Q09137"/>
<dbReference type="SMR" id="Q09137"/>
<dbReference type="BioGRID" id="249382">
    <property type="interactions" value="8"/>
</dbReference>
<dbReference type="CORUM" id="Q09137"/>
<dbReference type="FunCoup" id="Q09137">
    <property type="interactions" value="1323"/>
</dbReference>
<dbReference type="IntAct" id="Q09137">
    <property type="interactions" value="1"/>
</dbReference>
<dbReference type="STRING" id="10116.ENSRNOP00000010680"/>
<dbReference type="BindingDB" id="Q09137"/>
<dbReference type="ChEMBL" id="CHEMBL4637"/>
<dbReference type="GlyGen" id="Q09137">
    <property type="glycosylation" value="1 site"/>
</dbReference>
<dbReference type="iPTMnet" id="Q09137"/>
<dbReference type="PhosphoSitePlus" id="Q09137"/>
<dbReference type="jPOST" id="Q09137"/>
<dbReference type="PaxDb" id="10116-ENSRNOP00000010680"/>
<dbReference type="GeneID" id="78975"/>
<dbReference type="KEGG" id="rno:78975"/>
<dbReference type="UCSC" id="RGD:620893">
    <molecule id="Q09137-1"/>
    <property type="organism name" value="rat"/>
</dbReference>
<dbReference type="AGR" id="RGD:620893"/>
<dbReference type="CTD" id="5563"/>
<dbReference type="RGD" id="620893">
    <property type="gene designation" value="Prkaa2"/>
</dbReference>
<dbReference type="eggNOG" id="KOG0583">
    <property type="taxonomic scope" value="Eukaryota"/>
</dbReference>
<dbReference type="InParanoid" id="Q09137"/>
<dbReference type="OrthoDB" id="193931at2759"/>
<dbReference type="PhylomeDB" id="Q09137"/>
<dbReference type="BRENDA" id="2.7.11.1">
    <property type="organism ID" value="5301"/>
</dbReference>
<dbReference type="BRENDA" id="2.7.11.31">
    <property type="organism ID" value="5301"/>
</dbReference>
<dbReference type="Reactome" id="R-RNO-1632852">
    <property type="pathway name" value="Macroautophagy"/>
</dbReference>
<dbReference type="Reactome" id="R-RNO-163680">
    <property type="pathway name" value="AMPK inhibits chREBP transcriptional activation activity"/>
</dbReference>
<dbReference type="Reactome" id="R-RNO-200425">
    <property type="pathway name" value="Carnitine shuttle"/>
</dbReference>
<dbReference type="Reactome" id="R-RNO-380972">
    <property type="pathway name" value="Energy dependent regulation of mTOR by LKB1-AMPK"/>
</dbReference>
<dbReference type="Reactome" id="R-RNO-5628897">
    <property type="pathway name" value="TP53 Regulates Metabolic Genes"/>
</dbReference>
<dbReference type="Reactome" id="R-RNO-6804756">
    <property type="pathway name" value="Regulation of TP53 Activity through Phosphorylation"/>
</dbReference>
<dbReference type="Reactome" id="R-RNO-9759194">
    <property type="pathway name" value="Nuclear events mediated by NFE2L2"/>
</dbReference>
<dbReference type="SABIO-RK" id="Q09137"/>
<dbReference type="PRO" id="PR:Q09137"/>
<dbReference type="Proteomes" id="UP000002494">
    <property type="component" value="Unplaced"/>
</dbReference>
<dbReference type="GO" id="GO:0016324">
    <property type="term" value="C:apical plasma membrane"/>
    <property type="evidence" value="ECO:0000314"/>
    <property type="project" value="UniProtKB"/>
</dbReference>
<dbReference type="GO" id="GO:0030424">
    <property type="term" value="C:axon"/>
    <property type="evidence" value="ECO:0000315"/>
    <property type="project" value="ARUK-UCL"/>
</dbReference>
<dbReference type="GO" id="GO:0005737">
    <property type="term" value="C:cytoplasm"/>
    <property type="evidence" value="ECO:0000314"/>
    <property type="project" value="UniProtKB"/>
</dbReference>
<dbReference type="GO" id="GO:0010494">
    <property type="term" value="C:cytoplasmic stress granule"/>
    <property type="evidence" value="ECO:0000266"/>
    <property type="project" value="RGD"/>
</dbReference>
<dbReference type="GO" id="GO:0030425">
    <property type="term" value="C:dendrite"/>
    <property type="evidence" value="ECO:0000315"/>
    <property type="project" value="ARUK-UCL"/>
</dbReference>
<dbReference type="GO" id="GO:0043025">
    <property type="term" value="C:neuronal cell body"/>
    <property type="evidence" value="ECO:0000315"/>
    <property type="project" value="ARUK-UCL"/>
</dbReference>
<dbReference type="GO" id="GO:0005654">
    <property type="term" value="C:nucleoplasm"/>
    <property type="evidence" value="ECO:0000304"/>
    <property type="project" value="Reactome"/>
</dbReference>
<dbReference type="GO" id="GO:0031588">
    <property type="term" value="C:nucleotide-activated protein kinase complex"/>
    <property type="evidence" value="ECO:0000314"/>
    <property type="project" value="RGD"/>
</dbReference>
<dbReference type="GO" id="GO:0005634">
    <property type="term" value="C:nucleus"/>
    <property type="evidence" value="ECO:0000266"/>
    <property type="project" value="RGD"/>
</dbReference>
<dbReference type="GO" id="GO:0032991">
    <property type="term" value="C:protein-containing complex"/>
    <property type="evidence" value="ECO:0000314"/>
    <property type="project" value="RGD"/>
</dbReference>
<dbReference type="GO" id="GO:0047322">
    <property type="term" value="F:[hydroxymethylglutaryl-CoA reductase (NADPH)] kinase activity"/>
    <property type="evidence" value="ECO:0007669"/>
    <property type="project" value="UniProtKB-EC"/>
</dbReference>
<dbReference type="GO" id="GO:0004679">
    <property type="term" value="F:AMP-activated protein kinase activity"/>
    <property type="evidence" value="ECO:0000314"/>
    <property type="project" value="UniProtKB"/>
</dbReference>
<dbReference type="GO" id="GO:0005524">
    <property type="term" value="F:ATP binding"/>
    <property type="evidence" value="ECO:0000314"/>
    <property type="project" value="RGD"/>
</dbReference>
<dbReference type="GO" id="GO:0003682">
    <property type="term" value="F:chromatin binding"/>
    <property type="evidence" value="ECO:0000250"/>
    <property type="project" value="UniProtKB"/>
</dbReference>
<dbReference type="GO" id="GO:0140823">
    <property type="term" value="F:histone H2BS36 kinase activity"/>
    <property type="evidence" value="ECO:0000250"/>
    <property type="project" value="UniProtKB"/>
</dbReference>
<dbReference type="GO" id="GO:0046872">
    <property type="term" value="F:metal ion binding"/>
    <property type="evidence" value="ECO:0007669"/>
    <property type="project" value="UniProtKB-KW"/>
</dbReference>
<dbReference type="GO" id="GO:0004672">
    <property type="term" value="F:protein kinase activity"/>
    <property type="evidence" value="ECO:0000314"/>
    <property type="project" value="RGD"/>
</dbReference>
<dbReference type="GO" id="GO:0106310">
    <property type="term" value="F:protein serine kinase activity"/>
    <property type="evidence" value="ECO:0007669"/>
    <property type="project" value="RHEA"/>
</dbReference>
<dbReference type="GO" id="GO:0004674">
    <property type="term" value="F:protein serine/threonine kinase activity"/>
    <property type="evidence" value="ECO:0000314"/>
    <property type="project" value="RGD"/>
</dbReference>
<dbReference type="GO" id="GO:0004712">
    <property type="term" value="F:protein serine/threonine/tyrosine kinase activity"/>
    <property type="evidence" value="ECO:0000266"/>
    <property type="project" value="RGD"/>
</dbReference>
<dbReference type="GO" id="GO:0044877">
    <property type="term" value="F:protein-containing complex binding"/>
    <property type="evidence" value="ECO:0000314"/>
    <property type="project" value="RGD"/>
</dbReference>
<dbReference type="GO" id="GO:0030674">
    <property type="term" value="F:protein-macromolecule adaptor activity"/>
    <property type="evidence" value="ECO:0000314"/>
    <property type="project" value="RGD"/>
</dbReference>
<dbReference type="GO" id="GO:0006914">
    <property type="term" value="P:autophagy"/>
    <property type="evidence" value="ECO:0007669"/>
    <property type="project" value="UniProtKB-KW"/>
</dbReference>
<dbReference type="GO" id="GO:0071277">
    <property type="term" value="P:cellular response to calcium ion"/>
    <property type="evidence" value="ECO:0000315"/>
    <property type="project" value="ARUK-UCL"/>
</dbReference>
<dbReference type="GO" id="GO:0042149">
    <property type="term" value="P:cellular response to glucose starvation"/>
    <property type="evidence" value="ECO:0000250"/>
    <property type="project" value="UniProtKB"/>
</dbReference>
<dbReference type="GO" id="GO:0071333">
    <property type="term" value="P:cellular response to glucose stimulus"/>
    <property type="evidence" value="ECO:0000315"/>
    <property type="project" value="ARUK-UCL"/>
</dbReference>
<dbReference type="GO" id="GO:0031669">
    <property type="term" value="P:cellular response to nutrient levels"/>
    <property type="evidence" value="ECO:0000250"/>
    <property type="project" value="UniProtKB"/>
</dbReference>
<dbReference type="GO" id="GO:0034599">
    <property type="term" value="P:cellular response to oxidative stress"/>
    <property type="evidence" value="ECO:0000266"/>
    <property type="project" value="RGD"/>
</dbReference>
<dbReference type="GO" id="GO:0071380">
    <property type="term" value="P:cellular response to prostaglandin E stimulus"/>
    <property type="evidence" value="ECO:0000266"/>
    <property type="project" value="RGD"/>
</dbReference>
<dbReference type="GO" id="GO:0071466">
    <property type="term" value="P:cellular response to xenobiotic stimulus"/>
    <property type="evidence" value="ECO:0000266"/>
    <property type="project" value="RGD"/>
</dbReference>
<dbReference type="GO" id="GO:0006695">
    <property type="term" value="P:cholesterol biosynthetic process"/>
    <property type="evidence" value="ECO:0007669"/>
    <property type="project" value="UniProtKB-KW"/>
</dbReference>
<dbReference type="GO" id="GO:0097009">
    <property type="term" value="P:energy homeostasis"/>
    <property type="evidence" value="ECO:0000314"/>
    <property type="project" value="UniProtKB"/>
</dbReference>
<dbReference type="GO" id="GO:0006633">
    <property type="term" value="P:fatty acid biosynthetic process"/>
    <property type="evidence" value="ECO:0007669"/>
    <property type="project" value="UniProtKB-KW"/>
</dbReference>
<dbReference type="GO" id="GO:0055089">
    <property type="term" value="P:fatty acid homeostasis"/>
    <property type="evidence" value="ECO:0000314"/>
    <property type="project" value="UniProtKB"/>
</dbReference>
<dbReference type="GO" id="GO:0042593">
    <property type="term" value="P:glucose homeostasis"/>
    <property type="evidence" value="ECO:0000250"/>
    <property type="project" value="UniProtKB"/>
</dbReference>
<dbReference type="GO" id="GO:0008610">
    <property type="term" value="P:lipid biosynthetic process"/>
    <property type="evidence" value="ECO:0000250"/>
    <property type="project" value="UniProtKB"/>
</dbReference>
<dbReference type="GO" id="GO:1905691">
    <property type="term" value="P:lipid droplet disassembly"/>
    <property type="evidence" value="ECO:0000250"/>
    <property type="project" value="UniProtKB"/>
</dbReference>
<dbReference type="GO" id="GO:0043066">
    <property type="term" value="P:negative regulation of apoptotic process"/>
    <property type="evidence" value="ECO:0000250"/>
    <property type="project" value="UniProtKB"/>
</dbReference>
<dbReference type="GO" id="GO:0010629">
    <property type="term" value="P:negative regulation of gene expression"/>
    <property type="evidence" value="ECO:0000266"/>
    <property type="project" value="RGD"/>
</dbReference>
<dbReference type="GO" id="GO:1903944">
    <property type="term" value="P:negative regulation of hepatocyte apoptotic process"/>
    <property type="evidence" value="ECO:0000266"/>
    <property type="project" value="RGD"/>
</dbReference>
<dbReference type="GO" id="GO:0032007">
    <property type="term" value="P:negative regulation of TOR signaling"/>
    <property type="evidence" value="ECO:0000250"/>
    <property type="project" value="UniProtKB"/>
</dbReference>
<dbReference type="GO" id="GO:1904262">
    <property type="term" value="P:negative regulation of TORC1 signaling"/>
    <property type="evidence" value="ECO:0000250"/>
    <property type="project" value="UniProtKB"/>
</dbReference>
<dbReference type="GO" id="GO:1904428">
    <property type="term" value="P:negative regulation of tubulin deacetylation"/>
    <property type="evidence" value="ECO:0000266"/>
    <property type="project" value="RGD"/>
</dbReference>
<dbReference type="GO" id="GO:0010508">
    <property type="term" value="P:positive regulation of autophagy"/>
    <property type="evidence" value="ECO:0000250"/>
    <property type="project" value="UniProtKB"/>
</dbReference>
<dbReference type="GO" id="GO:0045821">
    <property type="term" value="P:positive regulation of glycolytic process"/>
    <property type="evidence" value="ECO:0000314"/>
    <property type="project" value="UniProtKB"/>
</dbReference>
<dbReference type="GO" id="GO:1903829">
    <property type="term" value="P:positive regulation of protein localization"/>
    <property type="evidence" value="ECO:0000266"/>
    <property type="project" value="RGD"/>
</dbReference>
<dbReference type="GO" id="GO:1990044">
    <property type="term" value="P:protein localization to lipid droplet"/>
    <property type="evidence" value="ECO:0000250"/>
    <property type="project" value="UniProtKB"/>
</dbReference>
<dbReference type="GO" id="GO:0042752">
    <property type="term" value="P:regulation of circadian rhythm"/>
    <property type="evidence" value="ECO:0000250"/>
    <property type="project" value="UniProtKB"/>
</dbReference>
<dbReference type="GO" id="GO:0010468">
    <property type="term" value="P:regulation of gene expression"/>
    <property type="evidence" value="ECO:0000266"/>
    <property type="project" value="RGD"/>
</dbReference>
<dbReference type="GO" id="GO:0019216">
    <property type="term" value="P:regulation of lipid metabolic process"/>
    <property type="evidence" value="ECO:0000314"/>
    <property type="project" value="RGD"/>
</dbReference>
<dbReference type="GO" id="GO:0016241">
    <property type="term" value="P:regulation of macroautophagy"/>
    <property type="evidence" value="ECO:0000250"/>
    <property type="project" value="UniProtKB"/>
</dbReference>
<dbReference type="GO" id="GO:0070507">
    <property type="term" value="P:regulation of microtubule cytoskeleton organization"/>
    <property type="evidence" value="ECO:0000266"/>
    <property type="project" value="RGD"/>
</dbReference>
<dbReference type="GO" id="GO:0062028">
    <property type="term" value="P:regulation of stress granule assembly"/>
    <property type="evidence" value="ECO:0000266"/>
    <property type="project" value="RGD"/>
</dbReference>
<dbReference type="GO" id="GO:0014823">
    <property type="term" value="P:response to activity"/>
    <property type="evidence" value="ECO:0000314"/>
    <property type="project" value="RGD"/>
</dbReference>
<dbReference type="GO" id="GO:0031000">
    <property type="term" value="P:response to caffeine"/>
    <property type="evidence" value="ECO:0000314"/>
    <property type="project" value="RGD"/>
</dbReference>
<dbReference type="GO" id="GO:0014850">
    <property type="term" value="P:response to muscle activity"/>
    <property type="evidence" value="ECO:0000266"/>
    <property type="project" value="RGD"/>
</dbReference>
<dbReference type="GO" id="GO:0048511">
    <property type="term" value="P:rhythmic process"/>
    <property type="evidence" value="ECO:0007669"/>
    <property type="project" value="UniProtKB-KW"/>
</dbReference>
<dbReference type="GO" id="GO:0016055">
    <property type="term" value="P:Wnt signaling pathway"/>
    <property type="evidence" value="ECO:0007669"/>
    <property type="project" value="UniProtKB-KW"/>
</dbReference>
<dbReference type="CDD" id="cd12200">
    <property type="entry name" value="AMPKA2_C"/>
    <property type="match status" value="1"/>
</dbReference>
<dbReference type="CDD" id="cd14079">
    <property type="entry name" value="STKc_AMPK_alpha"/>
    <property type="match status" value="1"/>
</dbReference>
<dbReference type="CDD" id="cd14404">
    <property type="entry name" value="UBA_AID_AAPK2"/>
    <property type="match status" value="1"/>
</dbReference>
<dbReference type="FunFam" id="1.10.510.10:FF:000079">
    <property type="entry name" value="Non-specific serine/threonine protein kinase"/>
    <property type="match status" value="1"/>
</dbReference>
<dbReference type="FunFam" id="1.10.8.10:FF:000014">
    <property type="entry name" value="Non-specific serine/threonine protein kinase"/>
    <property type="match status" value="1"/>
</dbReference>
<dbReference type="FunFam" id="3.30.200.20:FF:000136">
    <property type="entry name" value="Non-specific serine/threonine protein kinase"/>
    <property type="match status" value="1"/>
</dbReference>
<dbReference type="FunFam" id="3.30.310.80:FF:000003">
    <property type="entry name" value="Non-specific serine/threonine protein kinase"/>
    <property type="match status" value="1"/>
</dbReference>
<dbReference type="Gene3D" id="1.10.8.10">
    <property type="entry name" value="DNA helicase RuvA subunit, C-terminal domain"/>
    <property type="match status" value="1"/>
</dbReference>
<dbReference type="Gene3D" id="3.30.310.80">
    <property type="entry name" value="Kinase associated domain 1, KA1"/>
    <property type="match status" value="1"/>
</dbReference>
<dbReference type="Gene3D" id="3.30.200.20">
    <property type="entry name" value="Phosphorylase Kinase, domain 1"/>
    <property type="match status" value="1"/>
</dbReference>
<dbReference type="Gene3D" id="1.10.510.10">
    <property type="entry name" value="Transferase(Phosphotransferase) domain 1"/>
    <property type="match status" value="1"/>
</dbReference>
<dbReference type="InterPro" id="IPR032270">
    <property type="entry name" value="AMPK_C"/>
</dbReference>
<dbReference type="InterPro" id="IPR039148">
    <property type="entry name" value="AMPKA2_C"/>
</dbReference>
<dbReference type="InterPro" id="IPR028375">
    <property type="entry name" value="KA1/Ssp2_C"/>
</dbReference>
<dbReference type="InterPro" id="IPR011009">
    <property type="entry name" value="Kinase-like_dom_sf"/>
</dbReference>
<dbReference type="InterPro" id="IPR049020">
    <property type="entry name" value="PRKAA1/2_AID"/>
</dbReference>
<dbReference type="InterPro" id="IPR028783">
    <property type="entry name" value="PRKAA2"/>
</dbReference>
<dbReference type="InterPro" id="IPR000719">
    <property type="entry name" value="Prot_kinase_dom"/>
</dbReference>
<dbReference type="InterPro" id="IPR017441">
    <property type="entry name" value="Protein_kinase_ATP_BS"/>
</dbReference>
<dbReference type="InterPro" id="IPR008271">
    <property type="entry name" value="Ser/Thr_kinase_AS"/>
</dbReference>
<dbReference type="PANTHER" id="PTHR24346:SF104">
    <property type="entry name" value="5'-AMP-ACTIVATED PROTEIN KINASE CATALYTIC SUBUNIT ALPHA-2"/>
    <property type="match status" value="1"/>
</dbReference>
<dbReference type="PANTHER" id="PTHR24346">
    <property type="entry name" value="MAP/MICROTUBULE AFFINITY-REGULATING KINASE"/>
    <property type="match status" value="1"/>
</dbReference>
<dbReference type="Pfam" id="PF16579">
    <property type="entry name" value="AdenylateSensor"/>
    <property type="match status" value="1"/>
</dbReference>
<dbReference type="Pfam" id="PF21147">
    <property type="entry name" value="AMPK_alpha_AID"/>
    <property type="match status" value="1"/>
</dbReference>
<dbReference type="Pfam" id="PF00069">
    <property type="entry name" value="Pkinase"/>
    <property type="match status" value="1"/>
</dbReference>
<dbReference type="SMART" id="SM00220">
    <property type="entry name" value="S_TKc"/>
    <property type="match status" value="1"/>
</dbReference>
<dbReference type="SUPFAM" id="SSF103243">
    <property type="entry name" value="KA1-like"/>
    <property type="match status" value="1"/>
</dbReference>
<dbReference type="SUPFAM" id="SSF56112">
    <property type="entry name" value="Protein kinase-like (PK-like)"/>
    <property type="match status" value="1"/>
</dbReference>
<dbReference type="PROSITE" id="PS00107">
    <property type="entry name" value="PROTEIN_KINASE_ATP"/>
    <property type="match status" value="1"/>
</dbReference>
<dbReference type="PROSITE" id="PS50011">
    <property type="entry name" value="PROTEIN_KINASE_DOM"/>
    <property type="match status" value="1"/>
</dbReference>
<dbReference type="PROSITE" id="PS00108">
    <property type="entry name" value="PROTEIN_KINASE_ST"/>
    <property type="match status" value="1"/>
</dbReference>
<sequence length="552" mass="62258">MAEKQKHDGRVKIGHYVLGDTLGVGTFGKVKIGEHQLTGHKVAVKILNRQKIRSLDVVGKIKREIQNLKLFRHPHIIKLYQVISTPTDFFMVMEYVSGGELFDYICKHGRVEEVEARRLFQQILSAVDYCHRHMVVHRDLKPENVLLDAQMNAKIADFGLSNMMSDGEFLRTSCGSPNYAAPEVISGRLYAGPEVDIWSCGVILYALLCGTLPFDDEHVPTLFKKIRGGVFYIPEYLNRSIATLLMHMLQVDPLKRATIKDIREHEWFKQDLPSYLFPEDPSYDANVIDDEAVKEVCEKFECTESEVMNSLYSGDPQDQLAVAYHLIIDNRRIMNQASEFYLASSPPTGSFMDDMAMHIPPGLKPHPERMPPLIADSPKARCPLDALNTTKPKSLAVKKAKWHLGIRSQSKPYDIMAEVYRAMKQLDFEWKVVNAYHLRVRRKNPVTGNYVKMSLQLYLVDNRSYLLDFKSIDDEVVEQRSGSSTPQRSCSAAGLHRPRSSVDSSTAENHSLSGSLTGSLTGSTLSSASPRLGSHTMDFFEMCASLITALAR</sequence>
<proteinExistence type="evidence at protein level"/>
<reference key="1">
    <citation type="journal article" date="1994" name="J. Biol. Chem.">
        <title>Mammalian AMP-activated protein kinase is homologous to yeast and plant protein kinases involved in the regulation of carbon metabolism.</title>
        <authorList>
            <person name="Carling D."/>
            <person name="Aguan K."/>
            <person name="Woods A."/>
            <person name="Verhoeven A.J.M."/>
            <person name="Beri R.K."/>
            <person name="Brennan C.H."/>
            <person name="Sidebottom C."/>
            <person name="Davison M.D."/>
            <person name="Scott J."/>
        </authorList>
    </citation>
    <scope>NUCLEOTIDE SEQUENCE [MRNA] (ISOFORMS LONG AND SHORT)</scope>
    <scope>PARTIAL PROTEIN SEQUENCE</scope>
    <source>
        <tissue>Liver</tissue>
    </source>
</reference>
<reference key="2">
    <citation type="journal article" date="1995" name="Biochim. Biophys. Acta">
        <title>Catalytic subunits of the porcine and rat 5'-AMP-activated protein kinase are members of the SNF1 protein kinase family.</title>
        <authorList>
            <person name="Gao G."/>
            <person name="Widmer J."/>
            <person name="Stapleton D."/>
            <person name="Teh T."/>
            <person name="Cox T."/>
            <person name="Kemp B.E."/>
            <person name="Witters L.A."/>
        </authorList>
    </citation>
    <scope>NUCLEOTIDE SEQUENCE [MRNA] (ISOFORM LONG)</scope>
    <source>
        <strain>Sprague-Dawley</strain>
        <tissue>Liver</tissue>
    </source>
</reference>
<reference key="3">
    <citation type="journal article" date="1990" name="EMBO J.">
        <title>Regulation of HMG-CoA reductase: identification of the site phosphorylated by the AMP-activated protein kinase in vitro and in intact rat liver.</title>
        <authorList>
            <person name="Clarke P.R."/>
            <person name="Hardie D.G."/>
        </authorList>
    </citation>
    <scope>CATALYTIC ACTIVITY</scope>
    <scope>FUNCTION IN PHOSPHORYLATION OF HMGCR</scope>
</reference>
<reference key="4">
    <citation type="journal article" date="1996" name="J. Biol. Chem.">
        <title>Characterization of the AMP-activated protein kinase kinase from rat liver and identification of threonine 172 as the major site at which it phosphorylates AMP-activated protein kinase.</title>
        <authorList>
            <person name="Hawley S.A."/>
            <person name="Davison M."/>
            <person name="Woods A."/>
            <person name="Davies S.P."/>
            <person name="Beri R.K."/>
            <person name="Carling D."/>
            <person name="Hardie D.G."/>
        </authorList>
    </citation>
    <scope>PHOSPHORYLATION AT THR-172</scope>
    <scope>ACTIVITY REGULATION</scope>
</reference>
<reference key="5">
    <citation type="journal article" date="1997" name="J. Appl. Physiol.">
        <title>Phosphorylation of rat muscle acetyl-CoA carboxylase by AMP-activated protein kinase and protein kinase A.</title>
        <authorList>
            <person name="Winder W.W."/>
            <person name="Wilson H.A."/>
            <person name="Hardie D.G."/>
            <person name="Rasmussen B.B."/>
            <person name="Hutber C.A."/>
            <person name="Call G.B."/>
            <person name="Clayton R.D."/>
            <person name="Conley L.M."/>
            <person name="Yoon S."/>
            <person name="Zhou B."/>
        </authorList>
    </citation>
    <scope>CATALYTIC ACTIVITY</scope>
    <scope>FUNCTION IN PHOSPHORYLATION OF ACACA AND ACACB</scope>
</reference>
<reference key="6">
    <citation type="journal article" date="1999" name="FEBS Lett.">
        <title>AMP-activated protein kinase phosphorylation of endothelial NO synthase.</title>
        <authorList>
            <person name="Chen Z.P."/>
            <person name="Mitchelhill K.I."/>
            <person name="Michell B.J."/>
            <person name="Stapleton D."/>
            <person name="Rodriguez-Crespo I."/>
            <person name="Witters L.A."/>
            <person name="Power D.A."/>
            <person name="Ortiz de Montellano P.R."/>
            <person name="Kemp B.E."/>
        </authorList>
    </citation>
    <scope>FUNCTION IN PHOSPHORYLATION OF NOS3</scope>
</reference>
<reference key="7">
    <citation type="journal article" date="2000" name="Curr. Biol.">
        <title>Phosphorylation and activation of heart PFK-2 by AMPK has a role in the stimulation of glycolysis during ischaemia.</title>
        <authorList>
            <person name="Marsin A.S."/>
            <person name="Bertrand L."/>
            <person name="Rider M.H."/>
            <person name="Deprez J."/>
            <person name="Beauloye C."/>
            <person name="Vincent M.F."/>
            <person name="Van den Berghe G."/>
            <person name="Carling D."/>
            <person name="Hue L."/>
        </authorList>
    </citation>
    <scope>FUNCTION IN PHOSPHORYLATION OF PFKFB2</scope>
</reference>
<reference key="8">
    <citation type="journal article" date="2001" name="J. Biol. Chem.">
        <title>5'-AMP-activated protein kinase phosphorylates IRS-1 on Ser-789 in mouse C2C12 myotubes in response to 5-aminoimidazole-4-carboxamide riboside.</title>
        <authorList>
            <person name="Jakobsen S.N."/>
            <person name="Hardie D.G."/>
            <person name="Morrice N."/>
            <person name="Tornqvist H.E."/>
        </authorList>
    </citation>
    <scope>FUNCTION IN PHOSPHORYLATION OF IRS1</scope>
</reference>
<reference key="9">
    <citation type="journal article" date="2002" name="J. Biol. Chem.">
        <title>Mechanism for fatty acid 'sparing' effect on glucose-induced transcription: regulation of carbohydrate-responsive element-binding protein by AMP-activated protein kinase.</title>
        <authorList>
            <person name="Kawaguchi T."/>
            <person name="Osatomi K."/>
            <person name="Yamashita H."/>
            <person name="Kabashima T."/>
            <person name="Uyeda K."/>
        </authorList>
    </citation>
    <scope>FUNCTION IN PHOSPHORYLATION OF MLXIPL</scope>
</reference>
<reference key="10">
    <citation type="journal article" date="2002" name="J. Biol. Chem.">
        <title>The stimulation of glycolysis by hypoxia in activated monocytes is mediated by AMP-activated protein kinase and inducible 6-phosphofructo-2-kinase.</title>
        <authorList>
            <person name="Marsin A.S."/>
            <person name="Bouzin C."/>
            <person name="Bertrand L."/>
            <person name="Hue L."/>
        </authorList>
    </citation>
    <scope>FUNCTION IN PHOSPHORYLATION OF PFKFB3</scope>
</reference>
<reference key="11">
    <citation type="journal article" date="2003" name="Curr. Biol.">
        <title>LKB1 is the upstream kinase in the AMP-activated protein kinase cascade.</title>
        <authorList>
            <person name="Woods A."/>
            <person name="Johnstone S.R."/>
            <person name="Dickerson K."/>
            <person name="Leiper F.C."/>
            <person name="Fryer L.G."/>
            <person name="Neumann D."/>
            <person name="Schlattner U."/>
            <person name="Wallimann T."/>
            <person name="Carlson M."/>
            <person name="Carling D."/>
        </authorList>
    </citation>
    <scope>PHOSPHORYLATION AT THR-172</scope>
    <scope>ACTIVITY REGULATION</scope>
</reference>
<reference key="12">
    <citation type="journal article" date="2003" name="J. Biol.">
        <title>Complexes between the LKB1 tumor suppressor, STRAD alpha/beta and MO25 alpha/beta are upstream kinases in the AMP-activated protein kinase cascade.</title>
        <authorList>
            <person name="Hawley S.A."/>
            <person name="Boudeau J."/>
            <person name="Reid J.L."/>
            <person name="Mustard K.J."/>
            <person name="Udd L."/>
            <person name="Makela T.P."/>
            <person name="Alessi D.R."/>
            <person name="Hardie D.G."/>
        </authorList>
    </citation>
    <scope>FUNCTION</scope>
    <scope>ACTIVITY REGULATION</scope>
    <scope>PHOSPHORYLATION AT THR-172</scope>
</reference>
<reference key="13">
    <citation type="journal article" date="2003" name="J. Biol. Chem.">
        <title>AMP-activated protein kinase regulates HNF4alpha transcriptional activity by inhibiting dimer formation and decreasing protein stability.</title>
        <authorList>
            <person name="Hong Y.H."/>
            <person name="Varanasi U.S."/>
            <person name="Yang W."/>
            <person name="Leff T."/>
        </authorList>
    </citation>
    <scope>FUNCTION IN PHOSPHORYLATION OF HNF4A</scope>
</reference>
<reference key="14">
    <citation type="journal article" date="2003" name="J. Biol. Chem.">
        <title>Identification of phosphorylation sites in AMP-activated protein kinase (AMPK) for upstream AMPK kinases and study of their roles by site-directed mutagenesis.</title>
        <authorList>
            <person name="Woods A."/>
            <person name="Vertommen D."/>
            <person name="Neumann D."/>
            <person name="Turk R."/>
            <person name="Bayliss J."/>
            <person name="Schlattner U."/>
            <person name="Wallimann T."/>
            <person name="Carling D."/>
            <person name="Rider M.H."/>
        </authorList>
    </citation>
    <scope>PHOSPHORYLATION AT THR-258 AND SER-491</scope>
    <scope>IDENTIFICATION BY MASS SPECTROMETRY</scope>
</reference>
<reference key="15">
    <citation type="journal article" date="2004" name="J. Biol. Chem.">
        <title>Stimulation of the AMP-activated protein kinase leads to activation of eukaryotic elongation factor 2 kinase and to its phosphorylation at a novel site, serine 398.</title>
        <authorList>
            <person name="Browne G.J."/>
            <person name="Finn S.G."/>
            <person name="Proud C.G."/>
        </authorList>
    </citation>
    <scope>FUNCTION IN PHOSPHORYLATION OF EEF2K</scope>
</reference>
<reference key="16">
    <citation type="journal article" date="2005" name="Cell Metab.">
        <title>Calmodulin-dependent protein kinase kinase-beta is an alternative upstream kinase for AMP-activated protein kinase.</title>
        <authorList>
            <person name="Hawley S.A."/>
            <person name="Pan D.A."/>
            <person name="Mustard K.J."/>
            <person name="Ross L."/>
            <person name="Bain J."/>
            <person name="Edelman A.M."/>
            <person name="Frenguelli B.G."/>
            <person name="Hardie D.G."/>
        </authorList>
    </citation>
    <scope>PHOSPHORYLATION AT THR-172</scope>
    <scope>ACTIVITY REGULATION</scope>
</reference>
<reference key="17">
    <citation type="journal article" date="2005" name="Cell Metab.">
        <title>Ca2+/calmodulin-dependent protein kinase kinase-beta acts upstream of AMP-activated protein kinase in mammalian cells.</title>
        <authorList>
            <person name="Woods A."/>
            <person name="Dickerson K."/>
            <person name="Heath R."/>
            <person name="Hong S.-P."/>
            <person name="Momcilovic M."/>
            <person name="Johnstone S.R."/>
            <person name="Carlson M."/>
            <person name="Carling D."/>
        </authorList>
    </citation>
    <scope>PHOSPHORYLATION AT THR-172</scope>
    <scope>ACTIVITY REGULATION</scope>
</reference>
<reference key="18">
    <citation type="journal article" date="2007" name="Biochem. J.">
        <title>Regulation of the renal-specific Na+-K+-2Cl- co-transporter NKCC2 by AMP-activated protein kinase (AMPK).</title>
        <authorList>
            <person name="Fraser S.A."/>
            <person name="Gimenez I."/>
            <person name="Cook N."/>
            <person name="Jennings I."/>
            <person name="Katerelos M."/>
            <person name="Katsis F."/>
            <person name="Levidiotis V."/>
            <person name="Kemp B.E."/>
            <person name="Power D.A."/>
        </authorList>
    </citation>
    <scope>FUNCTION IN PHOSPHORYLATION OF SLC12A1</scope>
</reference>
<reference key="19">
    <citation type="journal article" date="2011" name="Autophagy">
        <title>Ulk1-mediated phosphorylation of AMPK constitutes a negative regulatory feedback loop.</title>
        <authorList>
            <person name="Loffler A.S."/>
            <person name="Alers S."/>
            <person name="Dieterle A.M."/>
            <person name="Keppeler H."/>
            <person name="Franz-Wachtel M."/>
            <person name="Kundu M."/>
            <person name="Campbell D.G."/>
            <person name="Wesselborg S."/>
            <person name="Alessi D.R."/>
            <person name="Stork B."/>
        </authorList>
    </citation>
    <scope>PHOSPHORYLATION BY ULK1</scope>
</reference>
<reference key="20">
    <citation type="journal article" date="2012" name="Nat. Commun.">
        <title>Quantitative maps of protein phosphorylation sites across 14 different rat organs and tissues.</title>
        <authorList>
            <person name="Lundby A."/>
            <person name="Secher A."/>
            <person name="Lage K."/>
            <person name="Nordsborg N.B."/>
            <person name="Dmytriyev A."/>
            <person name="Lundby C."/>
            <person name="Olsen J.V."/>
        </authorList>
    </citation>
    <scope>PHOSPHORYLATION [LARGE SCALE ANALYSIS] AT SER-377</scope>
    <scope>IDENTIFICATION BY MASS SPECTROMETRY [LARGE SCALE ANALYSIS]</scope>
</reference>
<reference key="21">
    <citation type="journal article" date="2015" name="Mol. Cell. Proteomics">
        <title>The last enzyme of the de novo purine synthesis pathway 5-aminoimidazole-4-carboxamide ribonucleotide formyltransferase/IMP cyclohydrolase (ATIC) plays a central role in insulin signaling and the Golgi/endosomes protein network.</title>
        <authorList>
            <person name="Boutchueng-Djidjou M."/>
            <person name="Collard-Simard G."/>
            <person name="Fortier S."/>
            <person name="Hebert S.S."/>
            <person name="Kelly I."/>
            <person name="Landry C.R."/>
            <person name="Faure R.L."/>
        </authorList>
    </citation>
    <scope>SUBUNIT</scope>
</reference>
<accession>Q09137</accession>
<comment type="function">
    <text evidence="2 4 8 9 10 11 12 13 15 17 20 21 24">Catalytic subunit of AMP-activated protein kinase (AMPK), an energy sensor protein kinase that plays a key role in regulating cellular energy metabolism (PubMed:14511394). In response to reduction of intracellular ATP levels, AMPK activates energy-producing pathways and inhibits energy-consuming processes: inhibits protein, carbohydrate and lipid biosynthesis, as well as cell growth and proliferation (By similarity). AMPK acts via direct phosphorylation of metabolic enzymes, and by longer-term effects via phosphorylation of transcription regulators (By similarity). Regulates lipid synthesis by phosphorylating and inactivating lipid metabolic enzymes such as ACACA, ACACB, GYS1, HMGCR and LIPE; regulates fatty acid and cholesterol synthesis by phosphorylating acetyl-CoA carboxylase (ACACA and ACACB) and hormone-sensitive lipase (LIPE) enzymes, respectively (PubMed:2369897, PubMed:9029219). Promotes lipolysis of lipid droplets by mediating phosphorylation of isoform 1 of CHKA (CHKalpha2) (By similarity). Regulates insulin-signaling and glycolysis by phosphorylating IRS1, PFKFB2 and PFKFB3 (PubMed:11069105, PubMed:11598104, PubMed:12065600). Involved in insulin receptor/INSR internalization (By similarity). AMPK stimulates glucose uptake in muscle by increasing the translocation of the glucose transporter SLC2A4/GLUT4 to the plasma membrane, possibly by mediating phosphorylation of TBC1D4/AS160 (By similarity). Regulates transcription and chromatin structure by phosphorylating transcription regulators involved in energy metabolism such as CRTC2/TORC2, FOXO3, histone H2B, HDAC5, MEF2C, MLXIPL/ChREBP, EP300, HNF4A, p53/TP53, SREBF1, SREBF2 and PPARGC1A (PubMed:11724780, PubMed:12740371). Acts as a key regulator of glucose homeostasis in liver by phosphorylating CRTC2/TORC2, leading to CRTC2/TORC2 sequestration in the cytoplasm (By similarity). In response to stress, phosphorylates 'Ser-36' of histone H2B (H2BS36ph), leading to promote transcription (By similarity). Acts as a key regulator of cell growth and proliferation by phosphorylating FNIP1, TSC2, RPTOR, WDR24 and ATG1/ULK1: in response to nutrient limitation, negatively regulates the mTORC1 complex by phosphorylating RPTOR component of the mTORC1 complex and by phosphorylating and activating TSC2 (By similarity). Also phosphorylates and inhibits GATOR2 subunit WDR24 in response to nutrient limitation, leading to suppress glucose-mediated mTORC1 activation (By similarity). In response to energetic stress, phosphorylates FNIP1, inactivating the non-canonical mTORC1 signaling, thereby promoting nuclear translocation of TFEB and TFE3, and inducing transcription of lysosomal or autophagy genes (By similarity). In response to nutrient limitation, promotes autophagy by phosphorylating and activating ATG1/ULK1 (By similarity). In that process, it also activates WDR45/WIPI4 (By similarity). Phosphorylates CASP6, thereby preventing its autoprocessing and subsequent activation (By similarity). AMPK also acts as a regulator of circadian rhythm by mediating phosphorylation of CRY1, leading to destabilize it (By similarity). May regulate the Wnt signaling pathway by phosphorylating CTNNB1, leading to stabilize it (By similarity). Also acts as a regulator of cellular polarity by remodeling the actin cytoskeleton; probably by indirectly activating myosin (By similarity). Also phosphorylates CFTR, EEF2K, KLC1, NOS3 and SLC12A1 (PubMed:10025949, PubMed:14709557, PubMed:17341212). Plays an important role in the differential regulation of pro-autophagy (composed of PIK3C3, BECN1, PIK3R4 and UVRAG or ATG14) and non-autophagy (composed of PIK3C3, BECN1 and PIK3R4) complexes, in response to glucose starvation (By similarity). Can inhibit the non-autophagy complex by phosphorylating PIK3C3 and can activate the pro-autophagy complex by phosphorylating BECN1 (By similarity). Upon glucose starvation, promotes ARF6 activation in a kinase-independent manner leading to cell migration (By similarity). Upon glucose deprivation mediates the phosphorylation of ACSS2 at 'Ser-659', which exposes the nuclear localization signal of ACSS2, required for its interaction with KPNA1 and nuclear translocation (By similarity). Upon stress, regulates mitochondrial fragmentation through phosphorylation of MTFR1L (By similarity).</text>
</comment>
<comment type="catalytic activity">
    <reaction evidence="21 24">
        <text>L-seryl-[protein] + ATP = O-phospho-L-seryl-[protein] + ADP + H(+)</text>
        <dbReference type="Rhea" id="RHEA:17989"/>
        <dbReference type="Rhea" id="RHEA-COMP:9863"/>
        <dbReference type="Rhea" id="RHEA-COMP:11604"/>
        <dbReference type="ChEBI" id="CHEBI:15378"/>
        <dbReference type="ChEBI" id="CHEBI:29999"/>
        <dbReference type="ChEBI" id="CHEBI:30616"/>
        <dbReference type="ChEBI" id="CHEBI:83421"/>
        <dbReference type="ChEBI" id="CHEBI:456216"/>
        <dbReference type="EC" id="2.7.11.1"/>
    </reaction>
</comment>
<comment type="catalytic activity">
    <reaction evidence="21 24">
        <text>L-threonyl-[protein] + ATP = O-phospho-L-threonyl-[protein] + ADP + H(+)</text>
        <dbReference type="Rhea" id="RHEA:46608"/>
        <dbReference type="Rhea" id="RHEA-COMP:11060"/>
        <dbReference type="Rhea" id="RHEA-COMP:11605"/>
        <dbReference type="ChEBI" id="CHEBI:15378"/>
        <dbReference type="ChEBI" id="CHEBI:30013"/>
        <dbReference type="ChEBI" id="CHEBI:30616"/>
        <dbReference type="ChEBI" id="CHEBI:61977"/>
        <dbReference type="ChEBI" id="CHEBI:456216"/>
        <dbReference type="EC" id="2.7.11.1"/>
    </reaction>
</comment>
<comment type="catalytic activity">
    <reaction evidence="24">
        <text>L-seryl-[acetyl-CoA carboxylase] + ATP = O-phospho-L-seryl-[acetyl-CoA carboxylase] + ADP + H(+)</text>
        <dbReference type="Rhea" id="RHEA:20333"/>
        <dbReference type="Rhea" id="RHEA-COMP:13722"/>
        <dbReference type="Rhea" id="RHEA-COMP:13723"/>
        <dbReference type="ChEBI" id="CHEBI:15378"/>
        <dbReference type="ChEBI" id="CHEBI:29999"/>
        <dbReference type="ChEBI" id="CHEBI:30616"/>
        <dbReference type="ChEBI" id="CHEBI:83421"/>
        <dbReference type="ChEBI" id="CHEBI:456216"/>
    </reaction>
</comment>
<comment type="catalytic activity">
    <reaction evidence="21">
        <text>L-seryl-[3-hydroxy-3-methylglutaryl-coenzyme A reductase] + ATP = O-phospho-L-seryl-[3-hydroxy-3-methylglutaryl-coenzyme A reductase] + ADP + H(+)</text>
        <dbReference type="Rhea" id="RHEA:23172"/>
        <dbReference type="Rhea" id="RHEA-COMP:13692"/>
        <dbReference type="Rhea" id="RHEA-COMP:13693"/>
        <dbReference type="ChEBI" id="CHEBI:15378"/>
        <dbReference type="ChEBI" id="CHEBI:29999"/>
        <dbReference type="ChEBI" id="CHEBI:30616"/>
        <dbReference type="ChEBI" id="CHEBI:83421"/>
        <dbReference type="ChEBI" id="CHEBI:456216"/>
        <dbReference type="EC" id="2.7.11.31"/>
    </reaction>
</comment>
<comment type="cofactor">
    <cofactor evidence="26">
        <name>Mg(2+)</name>
        <dbReference type="ChEBI" id="CHEBI:18420"/>
    </cofactor>
</comment>
<comment type="activity regulation">
    <text evidence="1">Activated by phosphorylation on Thr-172. Binding of AMP to non-catalytic gamma subunit (PRKAG1, PRKAG2 or PRKAG3) results in allosteric activation, inducing phosphorylation on Thr-172. AMP-binding to gamma subunit also sustains activity by preventing dephosphorylation of Thr-172. ADP also stimulates Thr-172 phosphorylation, without stimulating already phosphorylated AMPK. ATP promotes dephosphorylation of Thr-172, rendering the enzyme inactive. Under physiological conditions AMPK mainly exists in its inactive form in complex with ATP, which is much more abundant than AMP. Selectively inhibited by compound C (6-[4-(2-Piperidin-1-yl-ethoxy)-phenyl)]-3-pyridin-4-yl-pyyrazolo[1,5-a] pyrimidine. Activated by resveratrol, a natural polyphenol present in red wine, and S17834, a synthetic polyphenol. Salicylate/aspirin directly activates kinase activity, primarily by inhibiting Thr-172 dephosphorylation (By similarity).</text>
</comment>
<comment type="subunit">
    <text evidence="2 4 22">AMPK is a heterotrimer of an alpha catalytic subunit (PRKAA1 or PRKAA2), a beta (PRKAB1 or PRKAB2) and a gamma non-catalytic subunits (PRKAG1, PRKAG2 or PRKAG3). Interacts with FNIP1 and FNIP2. Associates with internalized INSR complexes on Golgi/endosomal membranes; PRKAA2/AMPK2 together with ATIC and HACD3/PTPLAD1 is proposed to be part of a signaling network regulating INSR autophosphorylation and endocytosis (PubMed:25687571). Interacts with DUSP29 (By similarity). Interacts with ARF6 (By similarity). The phosphorylated form at Thr-172 mediated by CamKK2 interacts with ACSS2 (By similarity).</text>
</comment>
<comment type="subcellular location">
    <subcellularLocation>
        <location evidence="4">Cytoplasm</location>
    </subcellularLocation>
    <subcellularLocation>
        <location evidence="2">Nucleus</location>
    </subcellularLocation>
    <text evidence="1">In response to stress, recruited by p53/TP53 to specific promoters.</text>
</comment>
<comment type="alternative products">
    <event type="alternative splicing"/>
    <isoform>
        <id>Q09137-1</id>
        <name>Long</name>
        <sequence type="displayed"/>
    </isoform>
    <isoform>
        <id>Q09137-2</id>
        <name>Short</name>
        <sequence type="described" ref="VSP_004949 VSP_004950"/>
    </isoform>
</comment>
<comment type="tissue specificity">
    <text>Skeletal muscle, lower levels in liver, heart and kidney.</text>
</comment>
<comment type="induction">
    <text>By AMP.</text>
</comment>
<comment type="domain">
    <text evidence="3">The AIS (autoinhibitory sequence) region shows some sequence similarity with the ubiquitin-associated domains and represses kinase activity.</text>
</comment>
<comment type="PTM">
    <text evidence="1">Ubiquitinated.</text>
</comment>
<comment type="PTM">
    <text evidence="1">Phosphorylated at Thr-172 by STK11/LKB1 in complex with STE20-related adapter-alpha (STRADA) pseudo kinase and CAB39. Also phosphorylated at Thr-172 by CAMKK2; triggered by a rise in intracellular calcium ions, without detectable changes in the AMP/ATP ratio. CAMKK1 can also phosphorylate Thr-172, but at much lower level. Dephosphorylated by protein phosphatase 2A and 2C (PP2A and PP2C). Phosphorylated by ULK1; leading to negatively regulate AMPK activity and suggesting the existence of a regulatory feedback loop between ULK1 and AMPK. Dephosphorylated by PPM1A and PPM1B at Thr-172 (mediated by STK11/LKB1) (By similarity).</text>
</comment>
<comment type="miscellaneous">
    <molecule>Isoform Short</molecule>
    <text evidence="26">Lacks the sequence parts essential for kinase activity and is therefore inactive.</text>
</comment>
<comment type="similarity">
    <text evidence="26">Belongs to the protein kinase superfamily. CAMK Ser/Thr protein kinase family. SNF1 subfamily.</text>
</comment>
<protein>
    <recommendedName>
        <fullName>5'-AMP-activated protein kinase catalytic subunit alpha-2</fullName>
        <shortName>AMPK subunit alpha-2</shortName>
        <ecNumber evidence="21 24">2.7.11.1</ecNumber>
    </recommendedName>
    <alternativeName>
        <fullName>Acetyl-CoA carboxylase kinase</fullName>
        <shortName>ACACA kinase</shortName>
    </alternativeName>
    <alternativeName>
        <fullName>Hydroxymethylglutaryl-CoA reductase kinase</fullName>
        <shortName>HMGCR kinase</shortName>
        <ecNumber evidence="21">2.7.11.31</ecNumber>
    </alternativeName>
</protein>